<dbReference type="EMBL" id="AP008232">
    <property type="protein sequence ID" value="BAE75527.1"/>
    <property type="molecule type" value="Genomic_DNA"/>
</dbReference>
<dbReference type="RefSeq" id="WP_011412063.1">
    <property type="nucleotide sequence ID" value="NC_007712.1"/>
</dbReference>
<dbReference type="SMR" id="Q2NQP8"/>
<dbReference type="STRING" id="343509.SG2252"/>
<dbReference type="KEGG" id="sgl:SG2252"/>
<dbReference type="eggNOG" id="COG0203">
    <property type="taxonomic scope" value="Bacteria"/>
</dbReference>
<dbReference type="HOGENOM" id="CLU_074407_2_0_6"/>
<dbReference type="OrthoDB" id="9809073at2"/>
<dbReference type="BioCyc" id="SGLO343509:SGP1_RS20715-MONOMER"/>
<dbReference type="Proteomes" id="UP000001932">
    <property type="component" value="Chromosome"/>
</dbReference>
<dbReference type="GO" id="GO:0022625">
    <property type="term" value="C:cytosolic large ribosomal subunit"/>
    <property type="evidence" value="ECO:0007669"/>
    <property type="project" value="TreeGrafter"/>
</dbReference>
<dbReference type="GO" id="GO:0003735">
    <property type="term" value="F:structural constituent of ribosome"/>
    <property type="evidence" value="ECO:0007669"/>
    <property type="project" value="InterPro"/>
</dbReference>
<dbReference type="GO" id="GO:0006412">
    <property type="term" value="P:translation"/>
    <property type="evidence" value="ECO:0007669"/>
    <property type="project" value="UniProtKB-UniRule"/>
</dbReference>
<dbReference type="FunFam" id="3.90.1030.10:FF:000001">
    <property type="entry name" value="50S ribosomal protein L17"/>
    <property type="match status" value="1"/>
</dbReference>
<dbReference type="Gene3D" id="3.90.1030.10">
    <property type="entry name" value="Ribosomal protein L17"/>
    <property type="match status" value="1"/>
</dbReference>
<dbReference type="HAMAP" id="MF_01368">
    <property type="entry name" value="Ribosomal_bL17"/>
    <property type="match status" value="1"/>
</dbReference>
<dbReference type="InterPro" id="IPR000456">
    <property type="entry name" value="Ribosomal_bL17"/>
</dbReference>
<dbReference type="InterPro" id="IPR047859">
    <property type="entry name" value="Ribosomal_bL17_CS"/>
</dbReference>
<dbReference type="InterPro" id="IPR036373">
    <property type="entry name" value="Ribosomal_bL17_sf"/>
</dbReference>
<dbReference type="NCBIfam" id="TIGR00059">
    <property type="entry name" value="L17"/>
    <property type="match status" value="1"/>
</dbReference>
<dbReference type="PANTHER" id="PTHR14413:SF16">
    <property type="entry name" value="LARGE RIBOSOMAL SUBUNIT PROTEIN BL17M"/>
    <property type="match status" value="1"/>
</dbReference>
<dbReference type="PANTHER" id="PTHR14413">
    <property type="entry name" value="RIBOSOMAL PROTEIN L17"/>
    <property type="match status" value="1"/>
</dbReference>
<dbReference type="Pfam" id="PF01196">
    <property type="entry name" value="Ribosomal_L17"/>
    <property type="match status" value="1"/>
</dbReference>
<dbReference type="SUPFAM" id="SSF64263">
    <property type="entry name" value="Prokaryotic ribosomal protein L17"/>
    <property type="match status" value="1"/>
</dbReference>
<dbReference type="PROSITE" id="PS01167">
    <property type="entry name" value="RIBOSOMAL_L17"/>
    <property type="match status" value="1"/>
</dbReference>
<sequence length="131" mass="14677">MRHRKSGRQLNRNSSHRQAMFRNMAGSLVRHEIIKTTLPKAKELRRVVEPLITLAKTDSVANRRLAFARTRDNEIVAKLFNELGPRFASRAGGYTRILKCGFRAGDNAPMAYIEFVDHAEATAPAAEATAE</sequence>
<accession>Q2NQP8</accession>
<proteinExistence type="inferred from homology"/>
<evidence type="ECO:0000255" key="1">
    <source>
        <dbReference type="HAMAP-Rule" id="MF_01368"/>
    </source>
</evidence>
<evidence type="ECO:0000305" key="2"/>
<organism>
    <name type="scientific">Sodalis glossinidius (strain morsitans)</name>
    <dbReference type="NCBI Taxonomy" id="343509"/>
    <lineage>
        <taxon>Bacteria</taxon>
        <taxon>Pseudomonadati</taxon>
        <taxon>Pseudomonadota</taxon>
        <taxon>Gammaproteobacteria</taxon>
        <taxon>Enterobacterales</taxon>
        <taxon>Bruguierivoracaceae</taxon>
        <taxon>Sodalis</taxon>
    </lineage>
</organism>
<protein>
    <recommendedName>
        <fullName evidence="1">Large ribosomal subunit protein bL17</fullName>
    </recommendedName>
    <alternativeName>
        <fullName evidence="2">50S ribosomal protein L17</fullName>
    </alternativeName>
</protein>
<keyword id="KW-0687">Ribonucleoprotein</keyword>
<keyword id="KW-0689">Ribosomal protein</keyword>
<feature type="chain" id="PRO_0000267950" description="Large ribosomal subunit protein bL17">
    <location>
        <begin position="1"/>
        <end position="131"/>
    </location>
</feature>
<reference key="1">
    <citation type="journal article" date="2006" name="Genome Res.">
        <title>Massive genome erosion and functional adaptations provide insights into the symbiotic lifestyle of Sodalis glossinidius in the tsetse host.</title>
        <authorList>
            <person name="Toh H."/>
            <person name="Weiss B.L."/>
            <person name="Perkin S.A.H."/>
            <person name="Yamashita A."/>
            <person name="Oshima K."/>
            <person name="Hattori M."/>
            <person name="Aksoy S."/>
        </authorList>
    </citation>
    <scope>NUCLEOTIDE SEQUENCE [LARGE SCALE GENOMIC DNA]</scope>
    <source>
        <strain>morsitans</strain>
    </source>
</reference>
<name>RL17_SODGM</name>
<comment type="subunit">
    <text evidence="1">Part of the 50S ribosomal subunit. Contacts protein L32.</text>
</comment>
<comment type="similarity">
    <text evidence="1">Belongs to the bacterial ribosomal protein bL17 family.</text>
</comment>
<gene>
    <name evidence="1" type="primary">rplQ</name>
    <name type="ordered locus">SG2252</name>
</gene>